<evidence type="ECO:0000250" key="1">
    <source>
        <dbReference type="UniProtKB" id="P02144"/>
    </source>
</evidence>
<evidence type="ECO:0000250" key="2">
    <source>
        <dbReference type="UniProtKB" id="P02185"/>
    </source>
</evidence>
<evidence type="ECO:0000250" key="3">
    <source>
        <dbReference type="UniProtKB" id="P02189"/>
    </source>
</evidence>
<evidence type="ECO:0000250" key="4">
    <source>
        <dbReference type="UniProtKB" id="P04247"/>
    </source>
</evidence>
<evidence type="ECO:0000250" key="5">
    <source>
        <dbReference type="UniProtKB" id="P68082"/>
    </source>
</evidence>
<evidence type="ECO:0000250" key="6">
    <source>
        <dbReference type="UniProtKB" id="Q9QZ76"/>
    </source>
</evidence>
<evidence type="ECO:0000255" key="7">
    <source>
        <dbReference type="PROSITE-ProRule" id="PRU00238"/>
    </source>
</evidence>
<protein>
    <recommendedName>
        <fullName>Myoglobin</fullName>
    </recommendedName>
    <alternativeName>
        <fullName evidence="1">Nitrite reductase MB</fullName>
        <ecNumber evidence="1">1.7.-.-</ecNumber>
    </alternativeName>
    <alternativeName>
        <fullName evidence="1">Pseudoperoxidase MB</fullName>
        <ecNumber evidence="1">1.11.1.-</ecNumber>
    </alternativeName>
</protein>
<sequence length="154" mass="17105">MGLSDGEWQLVLTVWGKVEADLAGHGQEVLIRLFKNHPETLEKFDKFKNLKSEDEMKGSDDLKKHGNTVLSALGGILKKKGQHEAELKPLAQSHATKHKIPVKYLEFISEAIIQVLQSKHPGDFGADAQGAMSKALELFRNDMAAKYKELGFHG</sequence>
<organism>
    <name type="scientific">Ochotona curzoniae</name>
    <name type="common">Black-lipped pika</name>
    <dbReference type="NCBI Taxonomy" id="130825"/>
    <lineage>
        <taxon>Eukaryota</taxon>
        <taxon>Metazoa</taxon>
        <taxon>Chordata</taxon>
        <taxon>Craniata</taxon>
        <taxon>Vertebrata</taxon>
        <taxon>Euteleostomi</taxon>
        <taxon>Mammalia</taxon>
        <taxon>Eutheria</taxon>
        <taxon>Euarchontoglires</taxon>
        <taxon>Glires</taxon>
        <taxon>Lagomorpha</taxon>
        <taxon>Ochotonidae</taxon>
        <taxon>Ochotona</taxon>
    </lineage>
</organism>
<comment type="function">
    <text evidence="1">Monomeric heme protein which primary function is to store oxygen and facilitate its diffusion within muscle tissues. Reversibly binds oxygen through a pentacoordinated heme iron and enables its timely and efficient release as needed during periods of heightened demand. Depending on the oxidative conditions of tissues and cells, and in addition to its ability to bind oxygen, it also has a nitrite reductase activity whereby it regulates the production of bioactive nitric oxide. Under stress conditions, like hypoxia and anoxia, it also protects cells against reactive oxygen species thanks to its pseudoperoxidase activity.</text>
</comment>
<comment type="catalytic activity">
    <reaction evidence="1">
        <text>Fe(III)-heme b-[protein] + nitric oxide + H2O = Fe(II)-heme b-[protein] + nitrite + 2 H(+)</text>
        <dbReference type="Rhea" id="RHEA:77711"/>
        <dbReference type="Rhea" id="RHEA-COMP:18975"/>
        <dbReference type="Rhea" id="RHEA-COMP:18976"/>
        <dbReference type="ChEBI" id="CHEBI:15377"/>
        <dbReference type="ChEBI" id="CHEBI:15378"/>
        <dbReference type="ChEBI" id="CHEBI:16301"/>
        <dbReference type="ChEBI" id="CHEBI:16480"/>
        <dbReference type="ChEBI" id="CHEBI:55376"/>
        <dbReference type="ChEBI" id="CHEBI:60344"/>
    </reaction>
    <physiologicalReaction direction="right-to-left" evidence="1">
        <dbReference type="Rhea" id="RHEA:77713"/>
    </physiologicalReaction>
</comment>
<comment type="catalytic activity">
    <reaction evidence="1">
        <text>H2O2 + AH2 = A + 2 H2O</text>
        <dbReference type="Rhea" id="RHEA:30275"/>
        <dbReference type="ChEBI" id="CHEBI:13193"/>
        <dbReference type="ChEBI" id="CHEBI:15377"/>
        <dbReference type="ChEBI" id="CHEBI:16240"/>
        <dbReference type="ChEBI" id="CHEBI:17499"/>
    </reaction>
</comment>
<comment type="subunit">
    <text evidence="2">Monomeric.</text>
</comment>
<comment type="subcellular location">
    <subcellularLocation>
        <location evidence="1">Cytoplasm</location>
        <location evidence="1">Sarcoplasm</location>
    </subcellularLocation>
</comment>
<comment type="similarity">
    <text evidence="7">Belongs to the globin family.</text>
</comment>
<name>MYG_OCHCU</name>
<gene>
    <name type="primary">MB</name>
</gene>
<dbReference type="EC" id="1.7.-.-" evidence="1"/>
<dbReference type="EC" id="1.11.1.-" evidence="1"/>
<dbReference type="EMBL" id="AY598018">
    <property type="protein sequence ID" value="AAS92621.1"/>
    <property type="molecule type" value="mRNA"/>
</dbReference>
<dbReference type="SMR" id="Q6PL31"/>
<dbReference type="GO" id="GO:0070062">
    <property type="term" value="C:extracellular exosome"/>
    <property type="evidence" value="ECO:0007669"/>
    <property type="project" value="TreeGrafter"/>
</dbReference>
<dbReference type="GO" id="GO:0016528">
    <property type="term" value="C:sarcoplasm"/>
    <property type="evidence" value="ECO:0000250"/>
    <property type="project" value="UniProtKB"/>
</dbReference>
<dbReference type="GO" id="GO:0020037">
    <property type="term" value="F:heme binding"/>
    <property type="evidence" value="ECO:0007669"/>
    <property type="project" value="InterPro"/>
</dbReference>
<dbReference type="GO" id="GO:0046872">
    <property type="term" value="F:metal ion binding"/>
    <property type="evidence" value="ECO:0007669"/>
    <property type="project" value="UniProtKB-KW"/>
</dbReference>
<dbReference type="GO" id="GO:0098809">
    <property type="term" value="F:nitrite reductase activity"/>
    <property type="evidence" value="ECO:0000250"/>
    <property type="project" value="UniProtKB"/>
</dbReference>
<dbReference type="GO" id="GO:0019825">
    <property type="term" value="F:oxygen binding"/>
    <property type="evidence" value="ECO:0007669"/>
    <property type="project" value="InterPro"/>
</dbReference>
<dbReference type="GO" id="GO:0005344">
    <property type="term" value="F:oxygen carrier activity"/>
    <property type="evidence" value="ECO:0000250"/>
    <property type="project" value="UniProtKB"/>
</dbReference>
<dbReference type="GO" id="GO:0004601">
    <property type="term" value="F:peroxidase activity"/>
    <property type="evidence" value="ECO:0000250"/>
    <property type="project" value="UniProtKB"/>
</dbReference>
<dbReference type="GO" id="GO:0019430">
    <property type="term" value="P:removal of superoxide radicals"/>
    <property type="evidence" value="ECO:0000250"/>
    <property type="project" value="UniProtKB"/>
</dbReference>
<dbReference type="CDD" id="cd08926">
    <property type="entry name" value="Mb"/>
    <property type="match status" value="1"/>
</dbReference>
<dbReference type="Gene3D" id="6.10.140.2100">
    <property type="match status" value="1"/>
</dbReference>
<dbReference type="Gene3D" id="6.10.140.2110">
    <property type="match status" value="1"/>
</dbReference>
<dbReference type="InterPro" id="IPR000971">
    <property type="entry name" value="Globin"/>
</dbReference>
<dbReference type="InterPro" id="IPR009050">
    <property type="entry name" value="Globin-like_sf"/>
</dbReference>
<dbReference type="InterPro" id="IPR002335">
    <property type="entry name" value="Myoglobin"/>
</dbReference>
<dbReference type="PANTHER" id="PTHR47132">
    <property type="entry name" value="MYOGLOBIN"/>
    <property type="match status" value="1"/>
</dbReference>
<dbReference type="PANTHER" id="PTHR47132:SF1">
    <property type="entry name" value="MYOGLOBIN"/>
    <property type="match status" value="1"/>
</dbReference>
<dbReference type="Pfam" id="PF00042">
    <property type="entry name" value="Globin"/>
    <property type="match status" value="1"/>
</dbReference>
<dbReference type="PRINTS" id="PR00613">
    <property type="entry name" value="MYOGLOBIN"/>
</dbReference>
<dbReference type="SUPFAM" id="SSF46458">
    <property type="entry name" value="Globin-like"/>
    <property type="match status" value="1"/>
</dbReference>
<dbReference type="PROSITE" id="PS01033">
    <property type="entry name" value="GLOBIN"/>
    <property type="match status" value="1"/>
</dbReference>
<feature type="chain" id="PRO_0000053321" description="Myoglobin">
    <location>
        <begin position="1"/>
        <end position="154"/>
    </location>
</feature>
<feature type="domain" description="Globin" evidence="7">
    <location>
        <begin position="2"/>
        <end position="148"/>
    </location>
</feature>
<feature type="binding site" evidence="5">
    <location>
        <position position="65"/>
    </location>
    <ligand>
        <name>nitrite</name>
        <dbReference type="ChEBI" id="CHEBI:16301"/>
    </ligand>
</feature>
<feature type="binding site" evidence="3 7">
    <location>
        <position position="65"/>
    </location>
    <ligand>
        <name>O2</name>
        <dbReference type="ChEBI" id="CHEBI:15379"/>
    </ligand>
</feature>
<feature type="binding site" description="proximal binding residue" evidence="1">
    <location>
        <position position="94"/>
    </location>
    <ligand>
        <name>heme b</name>
        <dbReference type="ChEBI" id="CHEBI:60344"/>
    </ligand>
    <ligandPart>
        <name>Fe</name>
        <dbReference type="ChEBI" id="CHEBI:18248"/>
    </ligandPart>
</feature>
<feature type="modified residue" description="Phosphoserine" evidence="6">
    <location>
        <position position="4"/>
    </location>
</feature>
<feature type="modified residue" description="Phosphothreonine" evidence="4">
    <location>
        <position position="68"/>
    </location>
</feature>
<proteinExistence type="evidence at transcript level"/>
<reference key="1">
    <citation type="submission" date="2004-04" db="EMBL/GenBank/DDBJ databases">
        <title>Identification of the coding cDNA sequence of myoglobin of Ochotona Princeps (Pika) living in Qinghai-Tibet plateau.</title>
        <authorList>
            <person name="Zhang C."/>
            <person name="Chen T."/>
            <person name="Gao Y."/>
            <person name="Hou B."/>
            <person name="Ge R."/>
        </authorList>
    </citation>
    <scope>NUCLEOTIDE SEQUENCE [MRNA]</scope>
    <source>
        <tissue>Brain</tissue>
    </source>
</reference>
<keyword id="KW-0963">Cytoplasm</keyword>
<keyword id="KW-0349">Heme</keyword>
<keyword id="KW-0408">Iron</keyword>
<keyword id="KW-0479">Metal-binding</keyword>
<keyword id="KW-0514">Muscle protein</keyword>
<keyword id="KW-0560">Oxidoreductase</keyword>
<keyword id="KW-0561">Oxygen transport</keyword>
<keyword id="KW-0597">Phosphoprotein</keyword>
<keyword id="KW-0813">Transport</keyword>
<accession>Q6PL31</accession>